<reference key="1">
    <citation type="journal article" date="1997" name="Yeast">
        <title>The characterization of two new clusters of duplicated genes suggests a 'Lego' organization of the yeast Saccharomyces cerevisiae chromosomes.</title>
        <authorList>
            <person name="Feuermann M."/>
            <person name="de Montigny J."/>
            <person name="Potier S."/>
            <person name="Souciet J.-L."/>
        </authorList>
    </citation>
    <scope>NUCLEOTIDE SEQUENCE [GENOMIC DNA]</scope>
    <source>
        <strain>ATCC 204508 / S288c</strain>
    </source>
</reference>
<reference key="2">
    <citation type="journal article" date="1997" name="Nature">
        <title>The nucleotide sequence of Saccharomyces cerevisiae chromosome VII.</title>
        <authorList>
            <person name="Tettelin H."/>
            <person name="Agostoni-Carbone M.L."/>
            <person name="Albermann K."/>
            <person name="Albers M."/>
            <person name="Arroyo J."/>
            <person name="Backes U."/>
            <person name="Barreiros T."/>
            <person name="Bertani I."/>
            <person name="Bjourson A.J."/>
            <person name="Brueckner M."/>
            <person name="Bruschi C.V."/>
            <person name="Carignani G."/>
            <person name="Castagnoli L."/>
            <person name="Cerdan E."/>
            <person name="Clemente M.L."/>
            <person name="Coblenz A."/>
            <person name="Coglievina M."/>
            <person name="Coissac E."/>
            <person name="Defoor E."/>
            <person name="Del Bino S."/>
            <person name="Delius H."/>
            <person name="Delneri D."/>
            <person name="de Wergifosse P."/>
            <person name="Dujon B."/>
            <person name="Durand P."/>
            <person name="Entian K.-D."/>
            <person name="Eraso P."/>
            <person name="Escribano V."/>
            <person name="Fabiani L."/>
            <person name="Fartmann B."/>
            <person name="Feroli F."/>
            <person name="Feuermann M."/>
            <person name="Frontali L."/>
            <person name="Garcia-Gonzalez M."/>
            <person name="Garcia-Saez M.I."/>
            <person name="Goffeau A."/>
            <person name="Guerreiro P."/>
            <person name="Hani J."/>
            <person name="Hansen M."/>
            <person name="Hebling U."/>
            <person name="Hernandez K."/>
            <person name="Heumann K."/>
            <person name="Hilger F."/>
            <person name="Hofmann B."/>
            <person name="Indge K.J."/>
            <person name="James C.M."/>
            <person name="Klima R."/>
            <person name="Koetter P."/>
            <person name="Kramer B."/>
            <person name="Kramer W."/>
            <person name="Lauquin G."/>
            <person name="Leuther H."/>
            <person name="Louis E.J."/>
            <person name="Maillier E."/>
            <person name="Marconi A."/>
            <person name="Martegani E."/>
            <person name="Mazon M.J."/>
            <person name="Mazzoni C."/>
            <person name="McReynolds A.D.K."/>
            <person name="Melchioretto P."/>
            <person name="Mewes H.-W."/>
            <person name="Minenkova O."/>
            <person name="Mueller-Auer S."/>
            <person name="Nawrocki A."/>
            <person name="Netter P."/>
            <person name="Neu R."/>
            <person name="Nombela C."/>
            <person name="Oliver S.G."/>
            <person name="Panzeri L."/>
            <person name="Paoluzi S."/>
            <person name="Plevani P."/>
            <person name="Portetelle D."/>
            <person name="Portillo F."/>
            <person name="Potier S."/>
            <person name="Purnelle B."/>
            <person name="Rieger M."/>
            <person name="Riles L."/>
            <person name="Rinaldi T."/>
            <person name="Robben J."/>
            <person name="Rodrigues-Pousada C."/>
            <person name="Rodriguez-Belmonte E."/>
            <person name="Rodriguez-Torres A.M."/>
            <person name="Rose M."/>
            <person name="Ruzzi M."/>
            <person name="Saliola M."/>
            <person name="Sanchez-Perez M."/>
            <person name="Schaefer B."/>
            <person name="Schaefer M."/>
            <person name="Scharfe M."/>
            <person name="Schmidheini T."/>
            <person name="Schreer A."/>
            <person name="Skala J."/>
            <person name="Souciet J.-L."/>
            <person name="Steensma H.Y."/>
            <person name="Talla E."/>
            <person name="Thierry A."/>
            <person name="Vandenbol M."/>
            <person name="van der Aart Q.J.M."/>
            <person name="Van Dyck L."/>
            <person name="Vanoni M."/>
            <person name="Verhasselt P."/>
            <person name="Voet M."/>
            <person name="Volckaert G."/>
            <person name="Wambutt R."/>
            <person name="Watson M.D."/>
            <person name="Weber N."/>
            <person name="Wedler E."/>
            <person name="Wedler H."/>
            <person name="Wipfli P."/>
            <person name="Wolf K."/>
            <person name="Wright L.F."/>
            <person name="Zaccaria P."/>
            <person name="Zimmermann M."/>
            <person name="Zollner A."/>
            <person name="Kleine K."/>
        </authorList>
    </citation>
    <scope>NUCLEOTIDE SEQUENCE [LARGE SCALE GENOMIC DNA]</scope>
    <source>
        <strain>ATCC 204508 / S288c</strain>
    </source>
</reference>
<reference key="3">
    <citation type="journal article" date="2014" name="G3 (Bethesda)">
        <title>The reference genome sequence of Saccharomyces cerevisiae: Then and now.</title>
        <authorList>
            <person name="Engel S.R."/>
            <person name="Dietrich F.S."/>
            <person name="Fisk D.G."/>
            <person name="Binkley G."/>
            <person name="Balakrishnan R."/>
            <person name="Costanzo M.C."/>
            <person name="Dwight S.S."/>
            <person name="Hitz B.C."/>
            <person name="Karra K."/>
            <person name="Nash R.S."/>
            <person name="Weng S."/>
            <person name="Wong E.D."/>
            <person name="Lloyd P."/>
            <person name="Skrzypek M.S."/>
            <person name="Miyasato S.R."/>
            <person name="Simison M."/>
            <person name="Cherry J.M."/>
        </authorList>
    </citation>
    <scope>GENOME REANNOTATION</scope>
    <scope>SEQUENCE REVISION TO 224-225</scope>
    <source>
        <strain>ATCC 204508 / S288c</strain>
    </source>
</reference>
<reference key="4">
    <citation type="journal article" date="2000" name="FEBS Lett.">
        <title>Genomic exploration of the hemiascomycetous yeasts: 4. The genome of Saccharomyces cerevisiae revisited.</title>
        <authorList>
            <person name="Blandin G."/>
            <person name="Durrens P."/>
            <person name="Tekaia F."/>
            <person name="Aigle M."/>
            <person name="Bolotin-Fukuhara M."/>
            <person name="Bon E."/>
            <person name="Casaregola S."/>
            <person name="de Montigny J."/>
            <person name="Gaillardin C."/>
            <person name="Lepingle A."/>
            <person name="Llorente B."/>
            <person name="Malpertuy A."/>
            <person name="Neuveglise C."/>
            <person name="Ozier-Kalogeropoulos O."/>
            <person name="Perrin A."/>
            <person name="Potier S."/>
            <person name="Souciet J.-L."/>
            <person name="Talla E."/>
            <person name="Toffano-Nioche C."/>
            <person name="Wesolowski-Louvel M."/>
            <person name="Marck C."/>
            <person name="Dujon B."/>
        </authorList>
    </citation>
    <scope>IDENTIFICATION OF FRAMESHIFT</scope>
</reference>
<reference key="5">
    <citation type="journal article" date="2003" name="Nature">
        <title>Global analysis of protein localization in budding yeast.</title>
        <authorList>
            <person name="Huh W.-K."/>
            <person name="Falvo J.V."/>
            <person name="Gerke L.C."/>
            <person name="Carroll A.S."/>
            <person name="Howson R.W."/>
            <person name="Weissman J.S."/>
            <person name="O'Shea E.K."/>
        </authorList>
    </citation>
    <scope>SUBCELLULAR LOCATION [LARGE SCALE ANALYSIS]</scope>
</reference>
<reference key="6">
    <citation type="journal article" date="2003" name="Nature">
        <title>Global analysis of protein expression in yeast.</title>
        <authorList>
            <person name="Ghaemmaghami S."/>
            <person name="Huh W.-K."/>
            <person name="Bower K."/>
            <person name="Howson R.W."/>
            <person name="Belle A."/>
            <person name="Dephoure N."/>
            <person name="O'Shea E.K."/>
            <person name="Weissman J.S."/>
        </authorList>
    </citation>
    <scope>LEVEL OF PROTEIN EXPRESSION [LARGE SCALE ANALYSIS]</scope>
</reference>
<reference key="7">
    <citation type="journal article" date="2005" name="Nature">
        <title>Global analysis of protein phosphorylation in yeast.</title>
        <authorList>
            <person name="Ptacek J."/>
            <person name="Devgan G."/>
            <person name="Michaud G."/>
            <person name="Zhu H."/>
            <person name="Zhu X."/>
            <person name="Fasolo J."/>
            <person name="Guo H."/>
            <person name="Jona G."/>
            <person name="Breitkreutz A."/>
            <person name="Sopko R."/>
            <person name="McCartney R.R."/>
            <person name="Schmidt M.C."/>
            <person name="Rachidi N."/>
            <person name="Lee S.-J."/>
            <person name="Mah A.S."/>
            <person name="Meng L."/>
            <person name="Stark M.J.R."/>
            <person name="Stern D.F."/>
            <person name="De Virgilio C."/>
            <person name="Tyers M."/>
            <person name="Andrews B."/>
            <person name="Gerstein M."/>
            <person name="Schweitzer B."/>
            <person name="Predki P.F."/>
            <person name="Snyder M."/>
        </authorList>
    </citation>
    <scope>FUNCTION</scope>
</reference>
<reference key="8">
    <citation type="journal article" date="2006" name="J. Proteome Res.">
        <title>Toward the complete yeast mitochondrial proteome: multidimensional separation techniques for mitochondrial proteomics.</title>
        <authorList>
            <person name="Reinders J."/>
            <person name="Zahedi R.P."/>
            <person name="Pfanner N."/>
            <person name="Meisinger C."/>
            <person name="Sickmann A."/>
        </authorList>
    </citation>
    <scope>SUBCELLULAR LOCATION [LARGE SCALE ANALYSIS]</scope>
    <scope>IDENTIFICATION BY MASS SPECTROMETRY</scope>
</reference>
<reference key="9">
    <citation type="journal article" date="2008" name="J. Biol. Chem.">
        <title>Yeast pyruvate dehydrogenase complex is regulated by a concerted activity of two kinases and two phosphatases.</title>
        <authorList>
            <person name="Gey U."/>
            <person name="Czupalla C."/>
            <person name="Hoflack B."/>
            <person name="Rodel G."/>
            <person name="Krause-Buchholz U."/>
        </authorList>
    </citation>
    <scope>SUBCELLULAR LOCATION</scope>
    <scope>FUNCTION</scope>
    <scope>CATALYTIC ACTIVITY</scope>
    <scope>INTERACTION WITH PKP1</scope>
</reference>
<reference key="10">
    <citation type="journal article" date="2008" name="Yeast">
        <title>Disruption of genes encoding pyruvate dehydrogenase kinases leads to retarded growth on acetate and ethanol in Saccharomyces cerevisiae.</title>
        <authorList>
            <person name="Steensma H.Y."/>
            <person name="Tomaska L."/>
            <person name="Reuven P."/>
            <person name="Nosek J."/>
            <person name="Brandt R."/>
        </authorList>
    </citation>
    <scope>SUBCELLULAR LOCATION</scope>
    <scope>FUNCTION</scope>
</reference>
<sequence>MSKYQINCIRYRHFLRTSNISQIPDFTKYCIGPVNEELAPYIMETMKAYPSNSEYINPQHYYHNRTVLVENYLKRSPNPVSLTQLAQYYDDSTKLTRTKIINSGKFVKEELVIRIAHKLNQLQQLPFNVVNNFHFVQVYESYYNIFESFRKYPTIRTLEDASQFADFIKNMLEGFNTLNLPHLIMGALECTILDLYPREKMDQLLSDLLRARISRRLIVEEHVSITANYTSGKEENTLVLGDIFQECSAKKYLLEASEESQKFIQDMYFKDIPMPEFIIEGDTQLSFYFLPTHLKYLLGEILRNTYEATMKHYIRKGLEKPEPIIVTVVSNDESYLFRISDKAGGVLHDDENLWSFGKSKERAQESLNNFHKLPGLQTVSIYDEVHSHTKYNSKLKSLQSITLKPYMHTSLEPMSYPSIINGHIKYETPLIELLKRSFRYKLGIGLAMCKVYAEYWNGDLSLHSMPGYGTDVVLKLGNLMKHTKKLQLDKV</sequence>
<name>PDK2_YEAST</name>
<organism>
    <name type="scientific">Saccharomyces cerevisiae (strain ATCC 204508 / S288c)</name>
    <name type="common">Baker's yeast</name>
    <dbReference type="NCBI Taxonomy" id="559292"/>
    <lineage>
        <taxon>Eukaryota</taxon>
        <taxon>Fungi</taxon>
        <taxon>Dikarya</taxon>
        <taxon>Ascomycota</taxon>
        <taxon>Saccharomycotina</taxon>
        <taxon>Saccharomycetes</taxon>
        <taxon>Saccharomycetales</taxon>
        <taxon>Saccharomycetaceae</taxon>
        <taxon>Saccharomyces</taxon>
    </lineage>
</organism>
<comment type="function">
    <text evidence="5 7 8">Inhibits the mitochondrial pyruvate dehydrogenase complex by phosphorylation of the E1 alpha subunit (PDA1), thus contributing to the regulation of glucose metabolism.</text>
</comment>
<comment type="catalytic activity">
    <reaction evidence="12">
        <text>L-seryl-[pyruvate dehydrogenase E1 alpha subunit] + ATP = O-phospho-L-seryl-[pyruvate dehydrogenase E1 alpha subunit] + ADP + H(+)</text>
        <dbReference type="Rhea" id="RHEA:23052"/>
        <dbReference type="Rhea" id="RHEA-COMP:13689"/>
        <dbReference type="Rhea" id="RHEA-COMP:13690"/>
        <dbReference type="ChEBI" id="CHEBI:15378"/>
        <dbReference type="ChEBI" id="CHEBI:29999"/>
        <dbReference type="ChEBI" id="CHEBI:30616"/>
        <dbReference type="ChEBI" id="CHEBI:83421"/>
        <dbReference type="ChEBI" id="CHEBI:456216"/>
        <dbReference type="EC" id="2.7.11.2"/>
    </reaction>
</comment>
<comment type="subunit">
    <text evidence="8">Interacts with PKP1.</text>
</comment>
<comment type="interaction">
    <interactant intactId="EBI-23792">
        <id>P53170</id>
    </interactant>
    <interactant intactId="EBI-2610722">
        <id>P40530</id>
        <label>PKP1</label>
    </interactant>
    <organismsDiffer>false</organismsDiffer>
    <experiments>4</experiments>
</comment>
<comment type="subcellular location">
    <subcellularLocation>
        <location evidence="3 6 7 8">Mitochondrion matrix</location>
    </subcellularLocation>
</comment>
<comment type="miscellaneous">
    <text evidence="4">Present with 450 molecules/cell in log phase SD medium.</text>
</comment>
<comment type="similarity">
    <text evidence="11">Belongs to the PDK/BCKDK protein kinase family.</text>
</comment>
<comment type="sequence caution" evidence="11">
    <conflict type="frameshift">
        <sequence resource="EMBL-CDS" id="CAA96762"/>
    </conflict>
</comment>
<accession>P53170</accession>
<accession>D6VU82</accession>
<evidence type="ECO:0000250" key="1">
    <source>
        <dbReference type="UniProtKB" id="Q15119"/>
    </source>
</evidence>
<evidence type="ECO:0000255" key="2"/>
<evidence type="ECO:0000269" key="3">
    <source>
    </source>
</evidence>
<evidence type="ECO:0000269" key="4">
    <source>
    </source>
</evidence>
<evidence type="ECO:0000269" key="5">
    <source>
    </source>
</evidence>
<evidence type="ECO:0000269" key="6">
    <source>
    </source>
</evidence>
<evidence type="ECO:0000269" key="7">
    <source>
    </source>
</evidence>
<evidence type="ECO:0000269" key="8">
    <source>
    </source>
</evidence>
<evidence type="ECO:0000303" key="9">
    <source>
    </source>
</evidence>
<evidence type="ECO:0000303" key="10">
    <source>
    </source>
</evidence>
<evidence type="ECO:0000305" key="11"/>
<evidence type="ECO:0000305" key="12">
    <source>
    </source>
</evidence>
<protein>
    <recommendedName>
        <fullName evidence="11">[Pyruvate dehydrogenase (acetyl-transferring)] kinase 2, mitochondrial</fullName>
        <shortName evidence="11">PDK 2</shortName>
        <shortName evidence="10">Pyruvate dehydrogenase kinase 2</shortName>
        <ecNumber evidence="12">2.7.11.2</ecNumber>
    </recommendedName>
    <alternativeName>
        <fullName evidence="10">Protein kinase of PDH protein 2</fullName>
    </alternativeName>
    <alternativeName>
        <fullName evidence="10">Pyruvate dehydrogenase complex kinase 2</fullName>
        <shortName evidence="9">PDC kinase 2</shortName>
    </alternativeName>
    <alternativeName>
        <fullName evidence="10">[Pyruvate dehydrogenase [lipoamide]] kinase 2</fullName>
    </alternativeName>
</protein>
<keyword id="KW-0067">ATP-binding</keyword>
<keyword id="KW-0418">Kinase</keyword>
<keyword id="KW-0496">Mitochondrion</keyword>
<keyword id="KW-0547">Nucleotide-binding</keyword>
<keyword id="KW-1185">Reference proteome</keyword>
<keyword id="KW-0808">Transferase</keyword>
<keyword id="KW-0809">Transit peptide</keyword>
<proteinExistence type="evidence at protein level"/>
<feature type="transit peptide" description="Mitochondrion" evidence="2">
    <location>
        <begin position="1"/>
        <end status="unknown"/>
    </location>
</feature>
<feature type="chain" id="PRO_0000202765" description="[Pyruvate dehydrogenase (acetyl-transferring)] kinase 2, mitochondrial">
    <location>
        <begin status="unknown"/>
        <end position="491"/>
    </location>
</feature>
<feature type="domain" description="Histidine kinase">
    <location>
        <begin position="153"/>
        <end position="480"/>
    </location>
</feature>
<feature type="binding site" evidence="1">
    <location>
        <begin position="300"/>
        <end position="307"/>
    </location>
    <ligand>
        <name>ATP</name>
        <dbReference type="ChEBI" id="CHEBI:30616"/>
    </ligand>
</feature>
<feature type="binding site" evidence="1">
    <location>
        <position position="341"/>
    </location>
    <ligand>
        <name>ATP</name>
        <dbReference type="ChEBI" id="CHEBI:30616"/>
    </ligand>
</feature>
<feature type="binding site" evidence="1">
    <location>
        <begin position="359"/>
        <end position="360"/>
    </location>
    <ligand>
        <name>ATP</name>
        <dbReference type="ChEBI" id="CHEBI:30616"/>
    </ligand>
</feature>
<feature type="binding site" evidence="1">
    <location>
        <begin position="383"/>
        <end position="446"/>
    </location>
    <ligand>
        <name>ATP</name>
        <dbReference type="ChEBI" id="CHEBI:30616"/>
    </ligand>
</feature>
<feature type="sequence conflict" description="In Ref. 1 and 2; CAA96762." evidence="11" ref="1 2">
    <original>SI</original>
    <variation>VY</variation>
    <location>
        <begin position="224"/>
        <end position="225"/>
    </location>
</feature>
<gene>
    <name evidence="10" type="primary">PKP2</name>
    <name type="ordered locus">YGL059W</name>
</gene>
<dbReference type="EC" id="2.7.11.2" evidence="12"/>
<dbReference type="EMBL" id="Z72581">
    <property type="protein sequence ID" value="CAA96762.1"/>
    <property type="status" value="ALT_FRAME"/>
    <property type="molecule type" value="Genomic_DNA"/>
</dbReference>
<dbReference type="EMBL" id="BK006941">
    <property type="protein sequence ID" value="DAA08043.2"/>
    <property type="molecule type" value="Genomic_DNA"/>
</dbReference>
<dbReference type="PIR" id="S64063">
    <property type="entry name" value="S64063"/>
</dbReference>
<dbReference type="RefSeq" id="NP_011456.5">
    <property type="nucleotide sequence ID" value="NM_001180924.4"/>
</dbReference>
<dbReference type="SMR" id="P53170"/>
<dbReference type="BioGRID" id="33188">
    <property type="interactions" value="150"/>
</dbReference>
<dbReference type="FunCoup" id="P53170">
    <property type="interactions" value="255"/>
</dbReference>
<dbReference type="IntAct" id="P53170">
    <property type="interactions" value="2"/>
</dbReference>
<dbReference type="MINT" id="P53170"/>
<dbReference type="STRING" id="4932.YGL059W"/>
<dbReference type="iPTMnet" id="P53170"/>
<dbReference type="PaxDb" id="4932-YGL059W"/>
<dbReference type="PeptideAtlas" id="P53170"/>
<dbReference type="EnsemblFungi" id="YGL059W_mRNA">
    <property type="protein sequence ID" value="YGL059W"/>
    <property type="gene ID" value="YGL059W"/>
</dbReference>
<dbReference type="GeneID" id="852821"/>
<dbReference type="KEGG" id="sce:YGL059W"/>
<dbReference type="AGR" id="SGD:S000003027"/>
<dbReference type="SGD" id="S000003027">
    <property type="gene designation" value="PKP2"/>
</dbReference>
<dbReference type="VEuPathDB" id="FungiDB:YGL059W"/>
<dbReference type="eggNOG" id="KOG0787">
    <property type="taxonomic scope" value="Eukaryota"/>
</dbReference>
<dbReference type="GeneTree" id="ENSGT01030000234646"/>
<dbReference type="HOGENOM" id="CLU_023861_0_0_1"/>
<dbReference type="InParanoid" id="P53170"/>
<dbReference type="OMA" id="ICEAQEH"/>
<dbReference type="OrthoDB" id="407390at2759"/>
<dbReference type="BioCyc" id="YEAST:G3O-30567-MONOMER"/>
<dbReference type="BioGRID-ORCS" id="852821">
    <property type="hits" value="0 hits in 13 CRISPR screens"/>
</dbReference>
<dbReference type="PRO" id="PR:P53170"/>
<dbReference type="Proteomes" id="UP000002311">
    <property type="component" value="Chromosome VII"/>
</dbReference>
<dbReference type="RNAct" id="P53170">
    <property type="molecule type" value="protein"/>
</dbReference>
<dbReference type="GO" id="GO:0005759">
    <property type="term" value="C:mitochondrial matrix"/>
    <property type="evidence" value="ECO:0007669"/>
    <property type="project" value="UniProtKB-SubCell"/>
</dbReference>
<dbReference type="GO" id="GO:0005739">
    <property type="term" value="C:mitochondrion"/>
    <property type="evidence" value="ECO:0000314"/>
    <property type="project" value="SGD"/>
</dbReference>
<dbReference type="GO" id="GO:0005524">
    <property type="term" value="F:ATP binding"/>
    <property type="evidence" value="ECO:0007669"/>
    <property type="project" value="UniProtKB-KW"/>
</dbReference>
<dbReference type="GO" id="GO:0004672">
    <property type="term" value="F:protein kinase activity"/>
    <property type="evidence" value="ECO:0000314"/>
    <property type="project" value="SGD"/>
</dbReference>
<dbReference type="GO" id="GO:0004740">
    <property type="term" value="F:pyruvate dehydrogenase (acetyl-transferring) kinase activity"/>
    <property type="evidence" value="ECO:0000315"/>
    <property type="project" value="SGD"/>
</dbReference>
<dbReference type="GO" id="GO:0010510">
    <property type="term" value="P:regulation of acetyl-CoA biosynthetic process from pyruvate"/>
    <property type="evidence" value="ECO:0000318"/>
    <property type="project" value="GO_Central"/>
</dbReference>
<dbReference type="GO" id="GO:0010906">
    <property type="term" value="P:regulation of glucose metabolic process"/>
    <property type="evidence" value="ECO:0000318"/>
    <property type="project" value="GO_Central"/>
</dbReference>
<dbReference type="GO" id="GO:1901524">
    <property type="term" value="P:regulation of mitophagy"/>
    <property type="evidence" value="ECO:0000315"/>
    <property type="project" value="SGD"/>
</dbReference>
<dbReference type="CDD" id="cd16929">
    <property type="entry name" value="HATPase_PDK-like"/>
    <property type="match status" value="1"/>
</dbReference>
<dbReference type="FunFam" id="1.20.140.20:FF:000006">
    <property type="entry name" value="Pkp2p"/>
    <property type="match status" value="1"/>
</dbReference>
<dbReference type="Gene3D" id="1.20.140.20">
    <property type="entry name" value="Alpha-ketoacid/pyruvate dehydrogenase kinase, N-terminal domain"/>
    <property type="match status" value="1"/>
</dbReference>
<dbReference type="Gene3D" id="3.30.565.10">
    <property type="entry name" value="Histidine kinase-like ATPase, C-terminal domain"/>
    <property type="match status" value="1"/>
</dbReference>
<dbReference type="InterPro" id="IPR036784">
    <property type="entry name" value="AK/P_DHK_N_sf"/>
</dbReference>
<dbReference type="InterPro" id="IPR018955">
    <property type="entry name" value="BCDHK/PDK_N"/>
</dbReference>
<dbReference type="InterPro" id="IPR039028">
    <property type="entry name" value="BCKD/PDK"/>
</dbReference>
<dbReference type="InterPro" id="IPR036890">
    <property type="entry name" value="HATPase_C_sf"/>
</dbReference>
<dbReference type="PANTHER" id="PTHR11947:SF25">
    <property type="entry name" value="[PYRUVATE DEHYDROGENASE (ACETYL-TRANSFERRING)] KINASE 2, MITOCHONDRIAL"/>
    <property type="match status" value="1"/>
</dbReference>
<dbReference type="PANTHER" id="PTHR11947">
    <property type="entry name" value="PYRUVATE DEHYDROGENASE KINASE"/>
    <property type="match status" value="1"/>
</dbReference>
<dbReference type="Pfam" id="PF10436">
    <property type="entry name" value="BCDHK_Adom3"/>
    <property type="match status" value="1"/>
</dbReference>
<dbReference type="SUPFAM" id="SSF69012">
    <property type="entry name" value="alpha-ketoacid dehydrogenase kinase, N-terminal domain"/>
    <property type="match status" value="1"/>
</dbReference>
<dbReference type="SUPFAM" id="SSF55874">
    <property type="entry name" value="ATPase domain of HSP90 chaperone/DNA topoisomerase II/histidine kinase"/>
    <property type="match status" value="1"/>
</dbReference>